<comment type="function">
    <text evidence="1">Involved in transcription antitermination. Required for transcription of ribosomal RNA (rRNA) genes. Binds specifically to the boxA antiterminator sequence of the ribosomal RNA (rrn) operons.</text>
</comment>
<comment type="similarity">
    <text evidence="1">Belongs to the NusB family.</text>
</comment>
<feature type="chain" id="PRO_1000057491" description="Transcription antitermination protein NusB">
    <location>
        <begin position="1"/>
        <end position="131"/>
    </location>
</feature>
<organism>
    <name type="scientific">Aliarcobacter butzleri (strain RM4018)</name>
    <name type="common">Arcobacter butzleri</name>
    <dbReference type="NCBI Taxonomy" id="367737"/>
    <lineage>
        <taxon>Bacteria</taxon>
        <taxon>Pseudomonadati</taxon>
        <taxon>Campylobacterota</taxon>
        <taxon>Epsilonproteobacteria</taxon>
        <taxon>Campylobacterales</taxon>
        <taxon>Arcobacteraceae</taxon>
        <taxon>Aliarcobacter</taxon>
    </lineage>
</organism>
<protein>
    <recommendedName>
        <fullName evidence="1">Transcription antitermination protein NusB</fullName>
    </recommendedName>
    <alternativeName>
        <fullName evidence="1">Antitermination factor NusB</fullName>
    </alternativeName>
</protein>
<evidence type="ECO:0000255" key="1">
    <source>
        <dbReference type="HAMAP-Rule" id="MF_00073"/>
    </source>
</evidence>
<name>NUSB_ALIB4</name>
<dbReference type="EMBL" id="CP000361">
    <property type="protein sequence ID" value="ABV68087.1"/>
    <property type="molecule type" value="Genomic_DNA"/>
</dbReference>
<dbReference type="RefSeq" id="WP_004511226.1">
    <property type="nucleotide sequence ID" value="NC_009850.1"/>
</dbReference>
<dbReference type="SMR" id="A8EVW4"/>
<dbReference type="STRING" id="367737.Abu_1847"/>
<dbReference type="GeneID" id="24305209"/>
<dbReference type="KEGG" id="abu:Abu_1847"/>
<dbReference type="eggNOG" id="COG0781">
    <property type="taxonomic scope" value="Bacteria"/>
</dbReference>
<dbReference type="HOGENOM" id="CLU_087843_3_3_7"/>
<dbReference type="Proteomes" id="UP000001136">
    <property type="component" value="Chromosome"/>
</dbReference>
<dbReference type="GO" id="GO:0005829">
    <property type="term" value="C:cytosol"/>
    <property type="evidence" value="ECO:0007669"/>
    <property type="project" value="TreeGrafter"/>
</dbReference>
<dbReference type="GO" id="GO:0003723">
    <property type="term" value="F:RNA binding"/>
    <property type="evidence" value="ECO:0007669"/>
    <property type="project" value="UniProtKB-UniRule"/>
</dbReference>
<dbReference type="GO" id="GO:0006353">
    <property type="term" value="P:DNA-templated transcription termination"/>
    <property type="evidence" value="ECO:0007669"/>
    <property type="project" value="UniProtKB-UniRule"/>
</dbReference>
<dbReference type="GO" id="GO:0031564">
    <property type="term" value="P:transcription antitermination"/>
    <property type="evidence" value="ECO:0007669"/>
    <property type="project" value="UniProtKB-KW"/>
</dbReference>
<dbReference type="Gene3D" id="1.10.940.10">
    <property type="entry name" value="NusB-like"/>
    <property type="match status" value="1"/>
</dbReference>
<dbReference type="HAMAP" id="MF_00073">
    <property type="entry name" value="NusB"/>
    <property type="match status" value="1"/>
</dbReference>
<dbReference type="InterPro" id="IPR035926">
    <property type="entry name" value="NusB-like_sf"/>
</dbReference>
<dbReference type="InterPro" id="IPR011605">
    <property type="entry name" value="NusB_fam"/>
</dbReference>
<dbReference type="InterPro" id="IPR006027">
    <property type="entry name" value="NusB_RsmB_TIM44"/>
</dbReference>
<dbReference type="NCBIfam" id="TIGR01951">
    <property type="entry name" value="nusB"/>
    <property type="match status" value="1"/>
</dbReference>
<dbReference type="PANTHER" id="PTHR11078:SF3">
    <property type="entry name" value="ANTITERMINATION NUSB DOMAIN-CONTAINING PROTEIN"/>
    <property type="match status" value="1"/>
</dbReference>
<dbReference type="PANTHER" id="PTHR11078">
    <property type="entry name" value="N UTILIZATION SUBSTANCE PROTEIN B-RELATED"/>
    <property type="match status" value="1"/>
</dbReference>
<dbReference type="Pfam" id="PF01029">
    <property type="entry name" value="NusB"/>
    <property type="match status" value="1"/>
</dbReference>
<dbReference type="SUPFAM" id="SSF48013">
    <property type="entry name" value="NusB-like"/>
    <property type="match status" value="1"/>
</dbReference>
<gene>
    <name evidence="1" type="primary">nusB</name>
    <name type="ordered locus">Abu_1847</name>
</gene>
<keyword id="KW-1185">Reference proteome</keyword>
<keyword id="KW-0694">RNA-binding</keyword>
<keyword id="KW-0804">Transcription</keyword>
<keyword id="KW-0889">Transcription antitermination</keyword>
<keyword id="KW-0805">Transcription regulation</keyword>
<reference key="1">
    <citation type="journal article" date="2007" name="PLoS ONE">
        <title>The complete genome sequence and analysis of the Epsilonproteobacterium Arcobacter butzleri.</title>
        <authorList>
            <person name="Miller W.G."/>
            <person name="Parker C.T."/>
            <person name="Rubenfield M."/>
            <person name="Mendz G.L."/>
            <person name="Woesten M.M.S.M."/>
            <person name="Ussery D.W."/>
            <person name="Stolz J.F."/>
            <person name="Binnewies T.T."/>
            <person name="Hallin P.F."/>
            <person name="Wang G."/>
            <person name="Malek J.A."/>
            <person name="Rogosin A."/>
            <person name="Stanker L.H."/>
            <person name="Mandrell R.E."/>
        </authorList>
    </citation>
    <scope>NUCLEOTIDE SEQUENCE [LARGE SCALE GENOMIC DNA]</scope>
    <source>
        <strain>RM4018</strain>
    </source>
</reference>
<proteinExistence type="inferred from homology"/>
<accession>A8EVW4</accession>
<sequence>MATRTQARESVIGLLYAYDLGNDGITKFVDEILEEKKIRNNQKDFALNLFNGTIKNLSQIDENIVSNLNQGTLSDIGSVEKSILRLAIYEILFESLPKAIIINEAIELSKRLASDGAPKFINGLLDKIVKA</sequence>